<reference key="1">
    <citation type="submission" date="2000-07" db="EMBL/GenBank/DDBJ databases">
        <title>Isolation of full-length cDNA clones from macaque brain cDNA libraries.</title>
        <authorList>
            <person name="Osada N."/>
            <person name="Hida M."/>
            <person name="Kusuda J."/>
            <person name="Tanuma R."/>
            <person name="Iseki K."/>
            <person name="Hirai M."/>
            <person name="Terao K."/>
            <person name="Suzuki Y."/>
            <person name="Sugano S."/>
            <person name="Hashimoto K."/>
        </authorList>
    </citation>
    <scope>NUCLEOTIDE SEQUENCE [LARGE SCALE MRNA] (ISOFORM 1)</scope>
    <source>
        <tissue>Brain cortex</tissue>
    </source>
</reference>
<reference key="2">
    <citation type="submission" date="2005-06" db="EMBL/GenBank/DDBJ databases">
        <title>DNA sequences of macaque genes expressed in brain or testis and its evolutionary implications.</title>
        <authorList>
            <consortium name="International consortium for macaque cDNA sequencing and analysis"/>
        </authorList>
    </citation>
    <scope>NUCLEOTIDE SEQUENCE [LARGE SCALE MRNA] (ISOFORM 2)</scope>
    <source>
        <tissue>Brain cortex</tissue>
    </source>
</reference>
<comment type="function">
    <text evidence="1">Calcium-independent, swelling-dependent volume-regulated anion channel (VRAC-swell) which plays a pivotal role in the process of regulatory volume decrease (RVD) in the brain through the efflux of anions like chloride and organic osmolytes like glutamate.</text>
</comment>
<comment type="catalytic activity">
    <reaction evidence="1">
        <text>chloride(in) = chloride(out)</text>
        <dbReference type="Rhea" id="RHEA:29823"/>
        <dbReference type="ChEBI" id="CHEBI:17996"/>
    </reaction>
</comment>
<comment type="catalytic activity">
    <reaction evidence="1">
        <text>L-glutamate(out) = L-glutamate(in)</text>
        <dbReference type="Rhea" id="RHEA:66336"/>
        <dbReference type="ChEBI" id="CHEBI:29985"/>
    </reaction>
    <physiologicalReaction direction="right-to-left" evidence="1">
        <dbReference type="Rhea" id="RHEA:66338"/>
    </physiologicalReaction>
</comment>
<comment type="subunit">
    <text evidence="1 2">Homotetramer; disulfide-linked. Homodimer.</text>
</comment>
<comment type="subcellular location">
    <subcellularLocation>
        <location evidence="1">Cell membrane</location>
        <topology evidence="3">Multi-pass membrane protein</topology>
    </subcellularLocation>
</comment>
<comment type="alternative products">
    <event type="alternative splicing"/>
    <isoform>
        <id>Q9MZZ8-1</id>
        <name>1</name>
        <sequence type="displayed"/>
    </isoform>
    <isoform>
        <id>Q9MZZ8-2</id>
        <name>2</name>
        <sequence type="described" ref="VSP_029761"/>
    </isoform>
</comment>
<comment type="PTM">
    <text evidence="2">N-glycosylated. Contains high-mannose, hybrid and complex oligosaccharides.</text>
</comment>
<comment type="similarity">
    <text evidence="6">Belongs to the tweety family.</text>
</comment>
<protein>
    <recommendedName>
        <fullName>Protein tweety homolog 1</fullName>
    </recommendedName>
    <alternativeName>
        <fullName evidence="1">Volume-regulated anion channel subunit TTYH1</fullName>
    </alternativeName>
</protein>
<sequence>MGAPPGYRPSAWVHLLHQLPRADFQLRPVPSGFAPQEQEYQQALLLVAALAGLGLGLSLIFIAVYLIRFCCCRPPEPPGSKTPSPGGGCVTWSCIVALLAGCIGIGIGFYGNSETSDGVSQLSSALLHANHTLSAIDHLVLETVERLGEAVRTELTTLEEVLEPRTELVAAARGARRQAEAVAQQLQGLAFWQGVPLSPLQVAEDVSFVEEYRWLAYVLLLLLELLVCLFTLLGLAKQSKWLVIVMTVMSLLVLVLSWGSMGLEAATAVGLSDFYSNPDPYVLNLTQEETGLSSDILSYYFLCNQAVSNPFQQRLTLSQRALANIHSQLLGLEREAVPQFPSAQKPLLSLEETLNVTEGNFHQLVALLHCRGLHKDYGAALRGLCEDALEGLLFLLLFSLLSAGALATALCSLPRAWALFPPSDDYDDTDDDDPFNPQESKRFVQWQSSI</sequence>
<keyword id="KW-0025">Alternative splicing</keyword>
<keyword id="KW-0130">Cell adhesion</keyword>
<keyword id="KW-1003">Cell membrane</keyword>
<keyword id="KW-0868">Chloride</keyword>
<keyword id="KW-0869">Chloride channel</keyword>
<keyword id="KW-1015">Disulfide bond</keyword>
<keyword id="KW-0325">Glycoprotein</keyword>
<keyword id="KW-0407">Ion channel</keyword>
<keyword id="KW-0406">Ion transport</keyword>
<keyword id="KW-0472">Membrane</keyword>
<keyword id="KW-0597">Phosphoprotein</keyword>
<keyword id="KW-1185">Reference proteome</keyword>
<keyword id="KW-0812">Transmembrane</keyword>
<keyword id="KW-1133">Transmembrane helix</keyword>
<keyword id="KW-0813">Transport</keyword>
<organism>
    <name type="scientific">Macaca fascicularis</name>
    <name type="common">Crab-eating macaque</name>
    <name type="synonym">Cynomolgus monkey</name>
    <dbReference type="NCBI Taxonomy" id="9541"/>
    <lineage>
        <taxon>Eukaryota</taxon>
        <taxon>Metazoa</taxon>
        <taxon>Chordata</taxon>
        <taxon>Craniata</taxon>
        <taxon>Vertebrata</taxon>
        <taxon>Euteleostomi</taxon>
        <taxon>Mammalia</taxon>
        <taxon>Eutheria</taxon>
        <taxon>Euarchontoglires</taxon>
        <taxon>Primates</taxon>
        <taxon>Haplorrhini</taxon>
        <taxon>Catarrhini</taxon>
        <taxon>Cercopithecidae</taxon>
        <taxon>Cercopithecinae</taxon>
        <taxon>Macaca</taxon>
    </lineage>
</organism>
<proteinExistence type="evidence at transcript level"/>
<dbReference type="EMBL" id="AB046649">
    <property type="protein sequence ID" value="BAB03567.1"/>
    <property type="molecule type" value="mRNA"/>
</dbReference>
<dbReference type="EMBL" id="AB169861">
    <property type="protein sequence ID" value="BAE01942.1"/>
    <property type="molecule type" value="mRNA"/>
</dbReference>
<dbReference type="RefSeq" id="NP_001270987.1">
    <property type="nucleotide sequence ID" value="NM_001284058.1"/>
</dbReference>
<dbReference type="SMR" id="Q9MZZ8"/>
<dbReference type="STRING" id="9541.ENSMFAP00000016095"/>
<dbReference type="GlyCosmos" id="Q9MZZ8">
    <property type="glycosylation" value="3 sites, No reported glycans"/>
</dbReference>
<dbReference type="eggNOG" id="KOG4433">
    <property type="taxonomic scope" value="Eukaryota"/>
</dbReference>
<dbReference type="Proteomes" id="UP000233100">
    <property type="component" value="Unplaced"/>
</dbReference>
<dbReference type="GO" id="GO:0034707">
    <property type="term" value="C:chloride channel complex"/>
    <property type="evidence" value="ECO:0007669"/>
    <property type="project" value="UniProtKB-KW"/>
</dbReference>
<dbReference type="GO" id="GO:0005886">
    <property type="term" value="C:plasma membrane"/>
    <property type="evidence" value="ECO:0000250"/>
    <property type="project" value="UniProtKB"/>
</dbReference>
<dbReference type="GO" id="GO:0030868">
    <property type="term" value="C:smooth endoplasmic reticulum membrane"/>
    <property type="evidence" value="ECO:0007669"/>
    <property type="project" value="TreeGrafter"/>
</dbReference>
<dbReference type="GO" id="GO:0005229">
    <property type="term" value="F:intracellularly calcium-gated chloride channel activity"/>
    <property type="evidence" value="ECO:0007669"/>
    <property type="project" value="TreeGrafter"/>
</dbReference>
<dbReference type="GO" id="GO:0072320">
    <property type="term" value="F:volume-sensitive chloride channel activity"/>
    <property type="evidence" value="ECO:0000250"/>
    <property type="project" value="UniProtKB"/>
</dbReference>
<dbReference type="GO" id="GO:0007155">
    <property type="term" value="P:cell adhesion"/>
    <property type="evidence" value="ECO:0007669"/>
    <property type="project" value="UniProtKB-KW"/>
</dbReference>
<dbReference type="GO" id="GO:0015813">
    <property type="term" value="P:L-glutamate transmembrane transport"/>
    <property type="evidence" value="ECO:0000250"/>
    <property type="project" value="UniProtKB"/>
</dbReference>
<dbReference type="CDD" id="cd07912">
    <property type="entry name" value="Tweety_N"/>
    <property type="match status" value="1"/>
</dbReference>
<dbReference type="InterPro" id="IPR006990">
    <property type="entry name" value="Tweety"/>
</dbReference>
<dbReference type="PANTHER" id="PTHR12424:SF5">
    <property type="entry name" value="PROTEIN TWEETY HOMOLOG 1"/>
    <property type="match status" value="1"/>
</dbReference>
<dbReference type="PANTHER" id="PTHR12424">
    <property type="entry name" value="TWEETY-RELATED"/>
    <property type="match status" value="1"/>
</dbReference>
<dbReference type="Pfam" id="PF04906">
    <property type="entry name" value="Tweety"/>
    <property type="match status" value="1"/>
</dbReference>
<evidence type="ECO:0000250" key="1">
    <source>
        <dbReference type="UniProtKB" id="Q9D3A9"/>
    </source>
</evidence>
<evidence type="ECO:0000250" key="2">
    <source>
        <dbReference type="UniProtKB" id="Q9H313"/>
    </source>
</evidence>
<evidence type="ECO:0000255" key="3"/>
<evidence type="ECO:0000256" key="4">
    <source>
        <dbReference type="SAM" id="MobiDB-lite"/>
    </source>
</evidence>
<evidence type="ECO:0000303" key="5">
    <source ref="2"/>
</evidence>
<evidence type="ECO:0000305" key="6"/>
<name>TTYH1_MACFA</name>
<gene>
    <name type="primary">TTYH1</name>
    <name type="ORF">QccE-16395</name>
    <name type="ORF">QccE-16959</name>
</gene>
<accession>Q9MZZ8</accession>
<accession>Q4R4N3</accession>
<feature type="chain" id="PRO_0000312240" description="Protein tweety homolog 1">
    <location>
        <begin position="1"/>
        <end position="450"/>
    </location>
</feature>
<feature type="topological domain" description="Extracellular" evidence="2">
    <location>
        <begin position="1"/>
        <end position="43"/>
    </location>
</feature>
<feature type="transmembrane region" description="Helical; Name=1" evidence="3">
    <location>
        <begin position="44"/>
        <end position="64"/>
    </location>
</feature>
<feature type="topological domain" description="Cytoplasmic" evidence="2">
    <location>
        <begin position="65"/>
        <end position="88"/>
    </location>
</feature>
<feature type="transmembrane region" description="Helical; Name=2" evidence="3">
    <location>
        <begin position="89"/>
        <end position="109"/>
    </location>
</feature>
<feature type="topological domain" description="Extracellular" evidence="2">
    <location>
        <begin position="110"/>
        <end position="214"/>
    </location>
</feature>
<feature type="transmembrane region" description="Helical; Name=3" evidence="3">
    <location>
        <begin position="215"/>
        <end position="235"/>
    </location>
</feature>
<feature type="topological domain" description="Cytoplasmic" evidence="2">
    <location>
        <begin position="236"/>
        <end position="240"/>
    </location>
</feature>
<feature type="transmembrane region" description="Helical; Name=4" evidence="3">
    <location>
        <begin position="241"/>
        <end position="261"/>
    </location>
</feature>
<feature type="topological domain" description="Extracellular" evidence="2">
    <location>
        <begin position="262"/>
        <end position="390"/>
    </location>
</feature>
<feature type="transmembrane region" description="Helical; Name=5" evidence="3">
    <location>
        <begin position="391"/>
        <end position="411"/>
    </location>
</feature>
<feature type="topological domain" description="Cytoplasmic" evidence="2">
    <location>
        <begin position="412"/>
        <end position="450"/>
    </location>
</feature>
<feature type="region of interest" description="Disordered" evidence="4">
    <location>
        <begin position="428"/>
        <end position="450"/>
    </location>
</feature>
<feature type="site" description="Essential for the formation of the channel-pore" evidence="1">
    <location>
        <position position="165"/>
    </location>
</feature>
<feature type="modified residue" description="Phosphoserine" evidence="1">
    <location>
        <position position="440"/>
    </location>
</feature>
<feature type="glycosylation site" description="N-linked (GlcNAc...) asparagine" evidence="3">
    <location>
        <position position="130"/>
    </location>
</feature>
<feature type="glycosylation site" description="N-linked (GlcNAc...) asparagine" evidence="3">
    <location>
        <position position="284"/>
    </location>
</feature>
<feature type="glycosylation site" description="N-linked (GlcNAc...) asparagine" evidence="3">
    <location>
        <position position="355"/>
    </location>
</feature>
<feature type="disulfide bond" evidence="2">
    <location>
        <begin position="303"/>
        <end position="370"/>
    </location>
</feature>
<feature type="splice variant" id="VSP_029761" description="In isoform 2." evidence="5">
    <original>P</original>
    <variation>PQ</variation>
    <location>
        <position position="437"/>
    </location>
</feature>
<feature type="sequence conflict" description="In Ref. 1; BAE01942." evidence="6" ref="1">
    <original>H</original>
    <variation>L</variation>
    <location>
        <position position="138"/>
    </location>
</feature>
<feature type="sequence conflict" description="In Ref. 1; BAE01942." evidence="6" ref="1">
    <original>L</original>
    <variation>P</variation>
    <location>
        <position position="223"/>
    </location>
</feature>
<feature type="sequence conflict" description="In Ref. 1; BAE01942." evidence="6" ref="1">
    <original>M</original>
    <variation>T</variation>
    <location>
        <position position="261"/>
    </location>
</feature>
<feature type="sequence conflict" description="In Ref. 1; BAE01942." evidence="6" ref="1">
    <original>Y</original>
    <variation>C</variation>
    <location>
        <position position="275"/>
    </location>
</feature>